<sequence length="725" mass="78935">MSADSKVWAHASADTWTTAQGISTYDLDTSSIKREKIDCHEQFNDGYGPPPGTASTDAVSYAADPTAYFNLYTNMGAAPTTTPMMHHEMGEAMKRDKEAIYAHPLYPLLVVLFEKCELATSTPRETSRDGTTSSDVCSSASFKDDLNEFVKHTQENADKQYYQPNPQLDQIMLQSIQMLRFHLLELEKVHELCDNFCNRYVTCLKGKMPLDIVGDERASSSQPPMSPGSMGHHGHSGSPSMGGAGAATPMHYPPPYEPQSVPLPENVLGGGHPLEMFPGSSMAYAMAGMAAAAASSSSSQPQPGDHPLANGGTLHSTAGASQTLLPIAVSSPSTCSSGGLRQDSTPLSGETPMANGNSMDSISEAERIRRRFYMCVIVSAGPSSSSLHQHHLHHPHHFPHHQLQPPAHHQDFLLPPPPQNIIEQSLHCAGVSMLDASLIPPSSSSSASEYHGDMMSHMYSHHDVYHHQDMTYTDYGDYGTPDVVMMSSSDVKMEDAASVSSSKSGGKKQQPGTPNGRVGKSRGRDEFSVCGSNEDGRDSVLSDSANGSQNGKRKVPKVFSKEAITKFRAWLFQNLAHPYPSEEQKKQLAKETGLTILQVNNWFINARRRIVQPMIDQNNRAGRTPHMNVCKNRRRNRSEQSPGPSPDSESDSGANYSPDPTSLAAATAMHYPGAELYMQRTMNYGGFQPFPNPAMQFMNPMMGFPVAPAVDAISQQWIDLSAPHE</sequence>
<name>UNC62_CAEBR</name>
<dbReference type="EMBL" id="HE601496">
    <property type="protein sequence ID" value="CAP21151.3"/>
    <property type="molecule type" value="Genomic_DNA"/>
</dbReference>
<dbReference type="SMR" id="A8WL06"/>
<dbReference type="FunCoup" id="A8WL06">
    <property type="interactions" value="1434"/>
</dbReference>
<dbReference type="STRING" id="6238.A8WL06"/>
<dbReference type="WormBase" id="CBG24578a">
    <property type="protein sequence ID" value="CBP42144"/>
    <property type="gene ID" value="WBGene00042654"/>
    <property type="gene designation" value="Cbr-unc-62"/>
</dbReference>
<dbReference type="eggNOG" id="KOG0773">
    <property type="taxonomic scope" value="Eukaryota"/>
</dbReference>
<dbReference type="HOGENOM" id="CLU_023139_3_0_1"/>
<dbReference type="InParanoid" id="A8WL06"/>
<dbReference type="OMA" id="AATAMHY"/>
<dbReference type="Proteomes" id="UP000008549">
    <property type="component" value="Unassembled WGS sequence"/>
</dbReference>
<dbReference type="GO" id="GO:0005634">
    <property type="term" value="C:nucleus"/>
    <property type="evidence" value="ECO:0007669"/>
    <property type="project" value="UniProtKB-SubCell"/>
</dbReference>
<dbReference type="GO" id="GO:0000987">
    <property type="term" value="F:cis-regulatory region sequence-specific DNA binding"/>
    <property type="evidence" value="ECO:0007669"/>
    <property type="project" value="UniProtKB-ARBA"/>
</dbReference>
<dbReference type="GO" id="GO:0001228">
    <property type="term" value="F:DNA-binding transcription activator activity, RNA polymerase II-specific"/>
    <property type="evidence" value="ECO:0000318"/>
    <property type="project" value="GO_Central"/>
</dbReference>
<dbReference type="GO" id="GO:0009887">
    <property type="term" value="P:animal organ morphogenesis"/>
    <property type="evidence" value="ECO:0000318"/>
    <property type="project" value="GO_Central"/>
</dbReference>
<dbReference type="GO" id="GO:0007420">
    <property type="term" value="P:brain development"/>
    <property type="evidence" value="ECO:0000318"/>
    <property type="project" value="GO_Central"/>
</dbReference>
<dbReference type="GO" id="GO:0009880">
    <property type="term" value="P:embryonic pattern specification"/>
    <property type="evidence" value="ECO:0000318"/>
    <property type="project" value="GO_Central"/>
</dbReference>
<dbReference type="GO" id="GO:0001654">
    <property type="term" value="P:eye development"/>
    <property type="evidence" value="ECO:0000318"/>
    <property type="project" value="GO_Central"/>
</dbReference>
<dbReference type="GO" id="GO:0008284">
    <property type="term" value="P:positive regulation of cell population proliferation"/>
    <property type="evidence" value="ECO:0000318"/>
    <property type="project" value="GO_Central"/>
</dbReference>
<dbReference type="GO" id="GO:0045944">
    <property type="term" value="P:positive regulation of transcription by RNA polymerase II"/>
    <property type="evidence" value="ECO:0000318"/>
    <property type="project" value="GO_Central"/>
</dbReference>
<dbReference type="CDD" id="cd00086">
    <property type="entry name" value="homeodomain"/>
    <property type="match status" value="1"/>
</dbReference>
<dbReference type="FunFam" id="1.10.10.60:FF:000004">
    <property type="entry name" value="Meis2 homeobox isoform 2c"/>
    <property type="match status" value="1"/>
</dbReference>
<dbReference type="Gene3D" id="1.10.10.60">
    <property type="entry name" value="Homeodomain-like"/>
    <property type="match status" value="1"/>
</dbReference>
<dbReference type="InterPro" id="IPR001356">
    <property type="entry name" value="HD"/>
</dbReference>
<dbReference type="InterPro" id="IPR009057">
    <property type="entry name" value="Homeodomain-like_sf"/>
</dbReference>
<dbReference type="InterPro" id="IPR008422">
    <property type="entry name" value="KN_HD"/>
</dbReference>
<dbReference type="InterPro" id="IPR032453">
    <property type="entry name" value="PKNOX/Meis_N"/>
</dbReference>
<dbReference type="InterPro" id="IPR050224">
    <property type="entry name" value="TALE_homeobox"/>
</dbReference>
<dbReference type="PANTHER" id="PTHR11850">
    <property type="entry name" value="HOMEOBOX PROTEIN TRANSCRIPTION FACTORS"/>
    <property type="match status" value="1"/>
</dbReference>
<dbReference type="Pfam" id="PF05920">
    <property type="entry name" value="Homeobox_KN"/>
    <property type="match status" value="1"/>
</dbReference>
<dbReference type="Pfam" id="PF16493">
    <property type="entry name" value="Meis_PKNOX_N"/>
    <property type="match status" value="1"/>
</dbReference>
<dbReference type="SMART" id="SM00389">
    <property type="entry name" value="HOX"/>
    <property type="match status" value="1"/>
</dbReference>
<dbReference type="SUPFAM" id="SSF46689">
    <property type="entry name" value="Homeodomain-like"/>
    <property type="match status" value="1"/>
</dbReference>
<dbReference type="PROSITE" id="PS50071">
    <property type="entry name" value="HOMEOBOX_2"/>
    <property type="match status" value="1"/>
</dbReference>
<evidence type="ECO:0000250" key="1">
    <source>
        <dbReference type="UniProtKB" id="Q9N5D6"/>
    </source>
</evidence>
<evidence type="ECO:0000255" key="2"/>
<evidence type="ECO:0000255" key="3">
    <source>
        <dbReference type="PROSITE-ProRule" id="PRU00108"/>
    </source>
</evidence>
<evidence type="ECO:0000256" key="4">
    <source>
        <dbReference type="SAM" id="MobiDB-lite"/>
    </source>
</evidence>
<proteinExistence type="inferred from homology"/>
<protein>
    <recommendedName>
        <fullName>Homeobox protein unc-62</fullName>
    </recommendedName>
    <alternativeName>
        <fullName>Uncoordinated protein 62</fullName>
    </alternativeName>
</protein>
<accession>A8WL06</accession>
<organism>
    <name type="scientific">Caenorhabditis briggsae</name>
    <dbReference type="NCBI Taxonomy" id="6238"/>
    <lineage>
        <taxon>Eukaryota</taxon>
        <taxon>Metazoa</taxon>
        <taxon>Ecdysozoa</taxon>
        <taxon>Nematoda</taxon>
        <taxon>Chromadorea</taxon>
        <taxon>Rhabditida</taxon>
        <taxon>Rhabditina</taxon>
        <taxon>Rhabditomorpha</taxon>
        <taxon>Rhabditoidea</taxon>
        <taxon>Rhabditidae</taxon>
        <taxon>Peloderinae</taxon>
        <taxon>Caenorhabditis</taxon>
    </lineage>
</organism>
<gene>
    <name type="primary">unc-62</name>
    <name type="ORF">CBG24578</name>
</gene>
<reference key="1">
    <citation type="journal article" date="2003" name="PLoS Biol.">
        <title>The genome sequence of Caenorhabditis briggsae: a platform for comparative genomics.</title>
        <authorList>
            <person name="Stein L.D."/>
            <person name="Bao Z."/>
            <person name="Blasiar D."/>
            <person name="Blumenthal T."/>
            <person name="Brent M.R."/>
            <person name="Chen N."/>
            <person name="Chinwalla A."/>
            <person name="Clarke L."/>
            <person name="Clee C."/>
            <person name="Coghlan A."/>
            <person name="Coulson A."/>
            <person name="D'Eustachio P."/>
            <person name="Fitch D.H.A."/>
            <person name="Fulton L.A."/>
            <person name="Fulton R.E."/>
            <person name="Griffiths-Jones S."/>
            <person name="Harris T.W."/>
            <person name="Hillier L.W."/>
            <person name="Kamath R."/>
            <person name="Kuwabara P.E."/>
            <person name="Mardis E.R."/>
            <person name="Marra M.A."/>
            <person name="Miner T.L."/>
            <person name="Minx P."/>
            <person name="Mullikin J.C."/>
            <person name="Plumb R.W."/>
            <person name="Rogers J."/>
            <person name="Schein J.E."/>
            <person name="Sohrmann M."/>
            <person name="Spieth J."/>
            <person name="Stajich J.E."/>
            <person name="Wei C."/>
            <person name="Willey D."/>
            <person name="Wilson R.K."/>
            <person name="Durbin R.M."/>
            <person name="Waterston R.H."/>
        </authorList>
    </citation>
    <scope>NUCLEOTIDE SEQUENCE [LARGE SCALE GENOMIC DNA]</scope>
    <source>
        <strain>AF16</strain>
    </source>
</reference>
<feature type="chain" id="PRO_0000341482" description="Homeobox protein unc-62">
    <location>
        <begin position="1"/>
        <end position="725"/>
    </location>
</feature>
<feature type="domain" description="MEIS N-terminal" evidence="2">
    <location>
        <begin position="133"/>
        <end position="218"/>
    </location>
</feature>
<feature type="DNA-binding region" description="Homeobox; TALE-type" evidence="3">
    <location>
        <begin position="552"/>
        <end position="614"/>
    </location>
</feature>
<feature type="region of interest" description="Disordered" evidence="4">
    <location>
        <begin position="214"/>
        <end position="258"/>
    </location>
</feature>
<feature type="region of interest" description="Disordered" evidence="4">
    <location>
        <begin position="295"/>
        <end position="317"/>
    </location>
</feature>
<feature type="region of interest" description="Disordered" evidence="4">
    <location>
        <begin position="329"/>
        <end position="359"/>
    </location>
</feature>
<feature type="region of interest" description="Disordered" evidence="4">
    <location>
        <begin position="386"/>
        <end position="419"/>
    </location>
</feature>
<feature type="region of interest" description="Disordered" evidence="4">
    <location>
        <begin position="491"/>
        <end position="555"/>
    </location>
</feature>
<feature type="region of interest" description="Disordered" evidence="4">
    <location>
        <begin position="615"/>
        <end position="661"/>
    </location>
</feature>
<feature type="compositionally biased region" description="Low complexity" evidence="4">
    <location>
        <begin position="219"/>
        <end position="239"/>
    </location>
</feature>
<feature type="compositionally biased region" description="Basic residues" evidence="4">
    <location>
        <begin position="388"/>
        <end position="400"/>
    </location>
</feature>
<feature type="compositionally biased region" description="Low complexity" evidence="4">
    <location>
        <begin position="498"/>
        <end position="508"/>
    </location>
</feature>
<feature type="compositionally biased region" description="Polar residues" evidence="4">
    <location>
        <begin position="541"/>
        <end position="550"/>
    </location>
</feature>
<keyword id="KW-0217">Developmental protein</keyword>
<keyword id="KW-0238">DNA-binding</keyword>
<keyword id="KW-0371">Homeobox</keyword>
<keyword id="KW-0539">Nucleus</keyword>
<keyword id="KW-1185">Reference proteome</keyword>
<comment type="function">
    <text evidence="1">Acts redundantly with ceh-20 and ceh-40 to perform overlapping roles during embryogenesis. Required for postembryonic development of the ectoderm, including the Q, V and P cell lineages, playing a crucial role in ensuring that these cells and their descendants undergo their invariant patterns of cell division, migration, fusion and morphogenesis. Has a role in the mig-13 pathway to promote anterior migration of neuroblasts in the Q lineage. Required for multiple roles in regulating vulva development (By similarity).</text>
</comment>
<comment type="subcellular location">
    <subcellularLocation>
        <location evidence="3">Nucleus</location>
    </subcellularLocation>
</comment>
<comment type="similarity">
    <text evidence="2">Belongs to the TALE/MEIS homeobox family.</text>
</comment>